<reference key="1">
    <citation type="journal article" date="2006" name="Mol. Microbiol.">
        <title>Role of pathogenicity island-associated integrases in the genome plasticity of uropathogenic Escherichia coli strain 536.</title>
        <authorList>
            <person name="Hochhut B."/>
            <person name="Wilde C."/>
            <person name="Balling G."/>
            <person name="Middendorf B."/>
            <person name="Dobrindt U."/>
            <person name="Brzuszkiewicz E."/>
            <person name="Gottschalk G."/>
            <person name="Carniel E."/>
            <person name="Hacker J."/>
        </authorList>
    </citation>
    <scope>NUCLEOTIDE SEQUENCE [LARGE SCALE GENOMIC DNA]</scope>
    <source>
        <strain>536 / UPEC</strain>
    </source>
</reference>
<feature type="chain" id="PRO_1000064341" description="Carnitinyl-CoA dehydratase">
    <location>
        <begin position="1"/>
        <end position="261"/>
    </location>
</feature>
<feature type="active site" description="Nucleophile" evidence="1">
    <location>
        <position position="111"/>
    </location>
</feature>
<feature type="active site" description="Proton acceptor" evidence="1">
    <location>
        <position position="131"/>
    </location>
</feature>
<protein>
    <recommendedName>
        <fullName evidence="1">Carnitinyl-CoA dehydratase</fullName>
        <ecNumber evidence="1">4.2.1.149</ecNumber>
    </recommendedName>
    <alternativeName>
        <fullName evidence="1">Crotonobetainyl-CoA hydratase</fullName>
    </alternativeName>
</protein>
<organism>
    <name type="scientific">Escherichia coli O6:K15:H31 (strain 536 / UPEC)</name>
    <dbReference type="NCBI Taxonomy" id="362663"/>
    <lineage>
        <taxon>Bacteria</taxon>
        <taxon>Pseudomonadati</taxon>
        <taxon>Pseudomonadota</taxon>
        <taxon>Gammaproteobacteria</taxon>
        <taxon>Enterobacterales</taxon>
        <taxon>Enterobacteriaceae</taxon>
        <taxon>Escherichia</taxon>
    </lineage>
</organism>
<name>CAID_ECOL5</name>
<accession>Q0TLV3</accession>
<proteinExistence type="inferred from homology"/>
<gene>
    <name evidence="1" type="primary">caiD</name>
    <name type="ordered locus">ECP_0036</name>
</gene>
<evidence type="ECO:0000255" key="1">
    <source>
        <dbReference type="HAMAP-Rule" id="MF_01051"/>
    </source>
</evidence>
<keyword id="KW-0456">Lyase</keyword>
<comment type="function">
    <text evidence="1">Catalyzes the reversible dehydration of L-carnitinyl-CoA to crotonobetainyl-CoA.</text>
</comment>
<comment type="catalytic activity">
    <reaction evidence="1">
        <text>(R)-carnitinyl-CoA = crotonobetainyl-CoA + H2O</text>
        <dbReference type="Rhea" id="RHEA:28338"/>
        <dbReference type="ChEBI" id="CHEBI:15377"/>
        <dbReference type="ChEBI" id="CHEBI:60932"/>
        <dbReference type="ChEBI" id="CHEBI:60933"/>
        <dbReference type="EC" id="4.2.1.149"/>
    </reaction>
</comment>
<comment type="pathway">
    <text evidence="1">Amine and polyamine metabolism; carnitine metabolism.</text>
</comment>
<comment type="similarity">
    <text evidence="1">Belongs to the enoyl-CoA hydratase/isomerase family.</text>
</comment>
<sequence length="261" mass="28176">MSESLHLTRNGSILEITLDRPKANAIDAKTSFEMGEVFLNFRDDPQLRVAIITGAGEKFFSAGWDLKAAAEGEAPDADFGPGGFAGLTEIFNLDKPVIAAVNGYAFGGGFELALAADFIVCADNASFALPEAKLGIVPDSGGVLRLPKILPPAIVNEMVMTGRRMGAEEALRWGVVNRVVSQAELMDNARELAQQLVNSAPLAIAALKEIYRTTSEMPVEEAYRYIRSGVLKHYPSVLHSEDAIEGPLAFAEKRDPVWKGR</sequence>
<dbReference type="EC" id="4.2.1.149" evidence="1"/>
<dbReference type="EMBL" id="CP000247">
    <property type="protein sequence ID" value="ABG68078.1"/>
    <property type="molecule type" value="Genomic_DNA"/>
</dbReference>
<dbReference type="RefSeq" id="WP_000004399.1">
    <property type="nucleotide sequence ID" value="NC_008253.1"/>
</dbReference>
<dbReference type="SMR" id="Q0TLV3"/>
<dbReference type="KEGG" id="ecp:ECP_0036"/>
<dbReference type="HOGENOM" id="CLU_009834_7_6_6"/>
<dbReference type="UniPathway" id="UPA00117"/>
<dbReference type="Proteomes" id="UP000009182">
    <property type="component" value="Chromosome"/>
</dbReference>
<dbReference type="GO" id="GO:0016836">
    <property type="term" value="F:hydro-lyase activity"/>
    <property type="evidence" value="ECO:0007669"/>
    <property type="project" value="UniProtKB-UniRule"/>
</dbReference>
<dbReference type="GO" id="GO:0008735">
    <property type="term" value="F:L-carnitine CoA-transferase activity"/>
    <property type="evidence" value="ECO:0007669"/>
    <property type="project" value="RHEA"/>
</dbReference>
<dbReference type="GO" id="GO:0009437">
    <property type="term" value="P:carnitine metabolic process"/>
    <property type="evidence" value="ECO:0007669"/>
    <property type="project" value="UniProtKB-UniRule"/>
</dbReference>
<dbReference type="GO" id="GO:0006635">
    <property type="term" value="P:fatty acid beta-oxidation"/>
    <property type="evidence" value="ECO:0007669"/>
    <property type="project" value="TreeGrafter"/>
</dbReference>
<dbReference type="CDD" id="cd06558">
    <property type="entry name" value="crotonase-like"/>
    <property type="match status" value="1"/>
</dbReference>
<dbReference type="FunFam" id="1.10.12.10:FF:000005">
    <property type="entry name" value="Carnitinyl-CoA dehydratase"/>
    <property type="match status" value="1"/>
</dbReference>
<dbReference type="FunFam" id="3.90.226.10:FF:000009">
    <property type="entry name" value="Carnitinyl-CoA dehydratase"/>
    <property type="match status" value="1"/>
</dbReference>
<dbReference type="Gene3D" id="3.90.226.10">
    <property type="entry name" value="2-enoyl-CoA Hydratase, Chain A, domain 1"/>
    <property type="match status" value="1"/>
</dbReference>
<dbReference type="Gene3D" id="1.10.12.10">
    <property type="entry name" value="Lyase 2-enoyl-coa Hydratase, Chain A, domain 2"/>
    <property type="match status" value="1"/>
</dbReference>
<dbReference type="HAMAP" id="MF_01051">
    <property type="entry name" value="CaiD"/>
    <property type="match status" value="1"/>
</dbReference>
<dbReference type="InterPro" id="IPR022852">
    <property type="entry name" value="Carnitinyl_CoA_dehydratase"/>
</dbReference>
<dbReference type="InterPro" id="IPR029045">
    <property type="entry name" value="ClpP/crotonase-like_dom_sf"/>
</dbReference>
<dbReference type="InterPro" id="IPR018376">
    <property type="entry name" value="Enoyl-CoA_hyd/isom_CS"/>
</dbReference>
<dbReference type="InterPro" id="IPR001753">
    <property type="entry name" value="Enoyl-CoA_hydra/iso"/>
</dbReference>
<dbReference type="InterPro" id="IPR014748">
    <property type="entry name" value="Enoyl-CoA_hydra_C"/>
</dbReference>
<dbReference type="NCBIfam" id="NF002936">
    <property type="entry name" value="PRK03580.1"/>
    <property type="match status" value="1"/>
</dbReference>
<dbReference type="PANTHER" id="PTHR11941:SF54">
    <property type="entry name" value="ENOYL-COA HYDRATASE, MITOCHONDRIAL"/>
    <property type="match status" value="1"/>
</dbReference>
<dbReference type="PANTHER" id="PTHR11941">
    <property type="entry name" value="ENOYL-COA HYDRATASE-RELATED"/>
    <property type="match status" value="1"/>
</dbReference>
<dbReference type="Pfam" id="PF00378">
    <property type="entry name" value="ECH_1"/>
    <property type="match status" value="1"/>
</dbReference>
<dbReference type="SUPFAM" id="SSF52096">
    <property type="entry name" value="ClpP/crotonase"/>
    <property type="match status" value="1"/>
</dbReference>
<dbReference type="PROSITE" id="PS00166">
    <property type="entry name" value="ENOYL_COA_HYDRATASE"/>
    <property type="match status" value="1"/>
</dbReference>